<evidence type="ECO:0000255" key="1">
    <source>
        <dbReference type="HAMAP-Rule" id="MF_00093"/>
    </source>
</evidence>
<organism>
    <name type="scientific">Gloeobacter violaceus (strain ATCC 29082 / PCC 7421)</name>
    <dbReference type="NCBI Taxonomy" id="251221"/>
    <lineage>
        <taxon>Bacteria</taxon>
        <taxon>Bacillati</taxon>
        <taxon>Cyanobacteriota</taxon>
        <taxon>Cyanophyceae</taxon>
        <taxon>Gloeobacterales</taxon>
        <taxon>Gloeobacteraceae</taxon>
        <taxon>Gloeobacter</taxon>
    </lineage>
</organism>
<dbReference type="EMBL" id="BA000045">
    <property type="protein sequence ID" value="BAC92362.1"/>
    <property type="molecule type" value="Genomic_DNA"/>
</dbReference>
<dbReference type="RefSeq" id="NP_927367.1">
    <property type="nucleotide sequence ID" value="NC_005125.1"/>
</dbReference>
<dbReference type="RefSeq" id="WP_011144404.1">
    <property type="nucleotide sequence ID" value="NC_005125.1"/>
</dbReference>
<dbReference type="SMR" id="Q7ND15"/>
<dbReference type="FunCoup" id="Q7ND15">
    <property type="interactions" value="312"/>
</dbReference>
<dbReference type="STRING" id="251221.gene:10761940"/>
<dbReference type="EnsemblBacteria" id="BAC92362">
    <property type="protein sequence ID" value="BAC92362"/>
    <property type="gene ID" value="BAC92362"/>
</dbReference>
<dbReference type="KEGG" id="gvi:glr4421"/>
<dbReference type="PATRIC" id="fig|251221.4.peg.4451"/>
<dbReference type="eggNOG" id="COG0216">
    <property type="taxonomic scope" value="Bacteria"/>
</dbReference>
<dbReference type="HOGENOM" id="CLU_036856_0_1_3"/>
<dbReference type="InParanoid" id="Q7ND15"/>
<dbReference type="OrthoDB" id="9806673at2"/>
<dbReference type="PhylomeDB" id="Q7ND15"/>
<dbReference type="Proteomes" id="UP000000557">
    <property type="component" value="Chromosome"/>
</dbReference>
<dbReference type="GO" id="GO:0005737">
    <property type="term" value="C:cytoplasm"/>
    <property type="evidence" value="ECO:0007669"/>
    <property type="project" value="UniProtKB-SubCell"/>
</dbReference>
<dbReference type="GO" id="GO:0016149">
    <property type="term" value="F:translation release factor activity, codon specific"/>
    <property type="evidence" value="ECO:0007669"/>
    <property type="project" value="UniProtKB-UniRule"/>
</dbReference>
<dbReference type="FunFam" id="3.30.160.20:FF:000004">
    <property type="entry name" value="Peptide chain release factor 1"/>
    <property type="match status" value="1"/>
</dbReference>
<dbReference type="FunFam" id="3.30.70.1660:FF:000002">
    <property type="entry name" value="Peptide chain release factor 1"/>
    <property type="match status" value="1"/>
</dbReference>
<dbReference type="Gene3D" id="3.30.160.20">
    <property type="match status" value="1"/>
</dbReference>
<dbReference type="Gene3D" id="3.30.70.1660">
    <property type="match status" value="1"/>
</dbReference>
<dbReference type="Gene3D" id="6.10.140.1950">
    <property type="match status" value="1"/>
</dbReference>
<dbReference type="HAMAP" id="MF_00093">
    <property type="entry name" value="Rel_fac_1"/>
    <property type="match status" value="1"/>
</dbReference>
<dbReference type="InterPro" id="IPR005139">
    <property type="entry name" value="PCRF"/>
</dbReference>
<dbReference type="InterPro" id="IPR000352">
    <property type="entry name" value="Pep_chain_release_fac_I"/>
</dbReference>
<dbReference type="InterPro" id="IPR045853">
    <property type="entry name" value="Pep_chain_release_fac_I_sf"/>
</dbReference>
<dbReference type="InterPro" id="IPR050057">
    <property type="entry name" value="Prokaryotic/Mito_RF"/>
</dbReference>
<dbReference type="InterPro" id="IPR004373">
    <property type="entry name" value="RF-1"/>
</dbReference>
<dbReference type="NCBIfam" id="TIGR00019">
    <property type="entry name" value="prfA"/>
    <property type="match status" value="1"/>
</dbReference>
<dbReference type="NCBIfam" id="NF001859">
    <property type="entry name" value="PRK00591.1"/>
    <property type="match status" value="1"/>
</dbReference>
<dbReference type="PANTHER" id="PTHR43804">
    <property type="entry name" value="LD18447P"/>
    <property type="match status" value="1"/>
</dbReference>
<dbReference type="PANTHER" id="PTHR43804:SF8">
    <property type="entry name" value="PEPTIDE CHAIN RELEASE FACTOR APG3, CHLOROPLASTIC"/>
    <property type="match status" value="1"/>
</dbReference>
<dbReference type="Pfam" id="PF03462">
    <property type="entry name" value="PCRF"/>
    <property type="match status" value="1"/>
</dbReference>
<dbReference type="Pfam" id="PF00472">
    <property type="entry name" value="RF-1"/>
    <property type="match status" value="1"/>
</dbReference>
<dbReference type="SMART" id="SM00937">
    <property type="entry name" value="PCRF"/>
    <property type="match status" value="1"/>
</dbReference>
<dbReference type="SUPFAM" id="SSF75620">
    <property type="entry name" value="Release factor"/>
    <property type="match status" value="1"/>
</dbReference>
<dbReference type="PROSITE" id="PS00745">
    <property type="entry name" value="RF_PROK_I"/>
    <property type="match status" value="1"/>
</dbReference>
<reference key="1">
    <citation type="journal article" date="2003" name="DNA Res.">
        <title>Complete genome structure of Gloeobacter violaceus PCC 7421, a cyanobacterium that lacks thylakoids.</title>
        <authorList>
            <person name="Nakamura Y."/>
            <person name="Kaneko T."/>
            <person name="Sato S."/>
            <person name="Mimuro M."/>
            <person name="Miyashita H."/>
            <person name="Tsuchiya T."/>
            <person name="Sasamoto S."/>
            <person name="Watanabe A."/>
            <person name="Kawashima K."/>
            <person name="Kishida Y."/>
            <person name="Kiyokawa C."/>
            <person name="Kohara M."/>
            <person name="Matsumoto M."/>
            <person name="Matsuno A."/>
            <person name="Nakazaki N."/>
            <person name="Shimpo S."/>
            <person name="Takeuchi C."/>
            <person name="Yamada M."/>
            <person name="Tabata S."/>
        </authorList>
    </citation>
    <scope>NUCLEOTIDE SEQUENCE [LARGE SCALE GENOMIC DNA]</scope>
    <source>
        <strain>ATCC 29082 / PCC 7421</strain>
    </source>
</reference>
<proteinExistence type="inferred from homology"/>
<accession>Q7ND15</accession>
<protein>
    <recommendedName>
        <fullName evidence="1">Peptide chain release factor 1</fullName>
        <shortName evidence="1">RF-1</shortName>
    </recommendedName>
</protein>
<comment type="function">
    <text evidence="1">Peptide chain release factor 1 directs the termination of translation in response to the peptide chain termination codons UAG and UAA.</text>
</comment>
<comment type="subcellular location">
    <subcellularLocation>
        <location evidence="1">Cytoplasm</location>
    </subcellularLocation>
</comment>
<comment type="PTM">
    <text evidence="1">Methylated by PrmC. Methylation increases the termination efficiency of RF1.</text>
</comment>
<comment type="similarity">
    <text evidence="1">Belongs to the prokaryotic/mitochondrial release factor family.</text>
</comment>
<keyword id="KW-0963">Cytoplasm</keyword>
<keyword id="KW-0488">Methylation</keyword>
<keyword id="KW-0648">Protein biosynthesis</keyword>
<keyword id="KW-1185">Reference proteome</keyword>
<sequence>MASPDLMVQKLNDIERTYNDLTTRLGDPSLASNPQEMLRIVRMRAGLERTVEAYDHWQRLCAERNAVRQMIRDEQDPELRELAEEEHTGLEERIARLEDEITLLLLPRDPNDDKNVMLEIRAGTGGDEAAIFAGDLMRMYIRYAEGQGWSVKLASESPAEMGGFKEVILEIRGESVYSKLKFEAGVHRVQRVPVTETQGRVHTSTATVAIMPEVEEVDVEINPNDIEITTTRSGGAGGQNVNKVETAVHLVHKPSGIHIHCQEERSQLQNKARAMQILRVKLYDIKQREQHEQVSGLRRSQVGTGDRSEKIRTYNYKDNRVTDHRLSQNFTLNTAIEGEIETLIQSAIAAAQREQLAELARSSG</sequence>
<feature type="chain" id="PRO_0000177677" description="Peptide chain release factor 1">
    <location>
        <begin position="1"/>
        <end position="364"/>
    </location>
</feature>
<feature type="modified residue" description="N5-methylglutamine" evidence="1">
    <location>
        <position position="239"/>
    </location>
</feature>
<gene>
    <name evidence="1" type="primary">prfA</name>
    <name type="ordered locus">glr4421</name>
</gene>
<name>RF1_GLOVI</name>